<dbReference type="EMBL" id="CP000708">
    <property type="protein sequence ID" value="ABQ61984.1"/>
    <property type="molecule type" value="Genomic_DNA"/>
</dbReference>
<dbReference type="RefSeq" id="WP_006012863.1">
    <property type="nucleotide sequence ID" value="NC_009505.1"/>
</dbReference>
<dbReference type="SMR" id="A5VR09"/>
<dbReference type="GeneID" id="45124604"/>
<dbReference type="KEGG" id="bov:BOV_1199"/>
<dbReference type="HOGENOM" id="CLU_002794_4_1_5"/>
<dbReference type="PhylomeDB" id="A5VR09"/>
<dbReference type="Proteomes" id="UP000006383">
    <property type="component" value="Chromosome I"/>
</dbReference>
<dbReference type="GO" id="GO:0005737">
    <property type="term" value="C:cytoplasm"/>
    <property type="evidence" value="ECO:0007669"/>
    <property type="project" value="UniProtKB-SubCell"/>
</dbReference>
<dbReference type="GO" id="GO:0005525">
    <property type="term" value="F:GTP binding"/>
    <property type="evidence" value="ECO:0007669"/>
    <property type="project" value="UniProtKB-UniRule"/>
</dbReference>
<dbReference type="GO" id="GO:0003924">
    <property type="term" value="F:GTPase activity"/>
    <property type="evidence" value="ECO:0007669"/>
    <property type="project" value="InterPro"/>
</dbReference>
<dbReference type="GO" id="GO:0097216">
    <property type="term" value="F:guanosine tetraphosphate binding"/>
    <property type="evidence" value="ECO:0007669"/>
    <property type="project" value="UniProtKB-ARBA"/>
</dbReference>
<dbReference type="GO" id="GO:0003746">
    <property type="term" value="F:translation elongation factor activity"/>
    <property type="evidence" value="ECO:0007669"/>
    <property type="project" value="UniProtKB-UniRule"/>
</dbReference>
<dbReference type="GO" id="GO:0032790">
    <property type="term" value="P:ribosome disassembly"/>
    <property type="evidence" value="ECO:0007669"/>
    <property type="project" value="TreeGrafter"/>
</dbReference>
<dbReference type="CDD" id="cd01886">
    <property type="entry name" value="EF-G"/>
    <property type="match status" value="1"/>
</dbReference>
<dbReference type="CDD" id="cd16262">
    <property type="entry name" value="EFG_III"/>
    <property type="match status" value="1"/>
</dbReference>
<dbReference type="CDD" id="cd01434">
    <property type="entry name" value="EFG_mtEFG1_IV"/>
    <property type="match status" value="1"/>
</dbReference>
<dbReference type="CDD" id="cd03713">
    <property type="entry name" value="EFG_mtEFG_C"/>
    <property type="match status" value="1"/>
</dbReference>
<dbReference type="CDD" id="cd04088">
    <property type="entry name" value="EFG_mtEFG_II"/>
    <property type="match status" value="1"/>
</dbReference>
<dbReference type="FunFam" id="2.40.30.10:FF:000006">
    <property type="entry name" value="Elongation factor G"/>
    <property type="match status" value="1"/>
</dbReference>
<dbReference type="FunFam" id="3.30.230.10:FF:000003">
    <property type="entry name" value="Elongation factor G"/>
    <property type="match status" value="1"/>
</dbReference>
<dbReference type="FunFam" id="3.30.70.240:FF:000001">
    <property type="entry name" value="Elongation factor G"/>
    <property type="match status" value="1"/>
</dbReference>
<dbReference type="FunFam" id="3.30.70.870:FF:000001">
    <property type="entry name" value="Elongation factor G"/>
    <property type="match status" value="1"/>
</dbReference>
<dbReference type="FunFam" id="3.40.50.300:FF:000029">
    <property type="entry name" value="Elongation factor G"/>
    <property type="match status" value="1"/>
</dbReference>
<dbReference type="Gene3D" id="3.30.230.10">
    <property type="match status" value="1"/>
</dbReference>
<dbReference type="Gene3D" id="3.30.70.240">
    <property type="match status" value="1"/>
</dbReference>
<dbReference type="Gene3D" id="3.30.70.870">
    <property type="entry name" value="Elongation Factor G (Translational Gtpase), domain 3"/>
    <property type="match status" value="1"/>
</dbReference>
<dbReference type="Gene3D" id="3.40.50.300">
    <property type="entry name" value="P-loop containing nucleotide triphosphate hydrolases"/>
    <property type="match status" value="1"/>
</dbReference>
<dbReference type="Gene3D" id="2.40.30.10">
    <property type="entry name" value="Translation factors"/>
    <property type="match status" value="1"/>
</dbReference>
<dbReference type="HAMAP" id="MF_00054_B">
    <property type="entry name" value="EF_G_EF_2_B"/>
    <property type="match status" value="1"/>
</dbReference>
<dbReference type="InterPro" id="IPR041095">
    <property type="entry name" value="EFG_II"/>
</dbReference>
<dbReference type="InterPro" id="IPR009022">
    <property type="entry name" value="EFG_III"/>
</dbReference>
<dbReference type="InterPro" id="IPR035647">
    <property type="entry name" value="EFG_III/V"/>
</dbReference>
<dbReference type="InterPro" id="IPR047872">
    <property type="entry name" value="EFG_IV"/>
</dbReference>
<dbReference type="InterPro" id="IPR035649">
    <property type="entry name" value="EFG_V"/>
</dbReference>
<dbReference type="InterPro" id="IPR000640">
    <property type="entry name" value="EFG_V-like"/>
</dbReference>
<dbReference type="InterPro" id="IPR004161">
    <property type="entry name" value="EFTu-like_2"/>
</dbReference>
<dbReference type="InterPro" id="IPR031157">
    <property type="entry name" value="G_TR_CS"/>
</dbReference>
<dbReference type="InterPro" id="IPR027417">
    <property type="entry name" value="P-loop_NTPase"/>
</dbReference>
<dbReference type="InterPro" id="IPR020568">
    <property type="entry name" value="Ribosomal_Su5_D2-typ_SF"/>
</dbReference>
<dbReference type="InterPro" id="IPR014721">
    <property type="entry name" value="Ribsml_uS5_D2-typ_fold_subgr"/>
</dbReference>
<dbReference type="InterPro" id="IPR005225">
    <property type="entry name" value="Small_GTP-bd"/>
</dbReference>
<dbReference type="InterPro" id="IPR000795">
    <property type="entry name" value="T_Tr_GTP-bd_dom"/>
</dbReference>
<dbReference type="InterPro" id="IPR009000">
    <property type="entry name" value="Transl_B-barrel_sf"/>
</dbReference>
<dbReference type="InterPro" id="IPR004540">
    <property type="entry name" value="Transl_elong_EFG/EF2"/>
</dbReference>
<dbReference type="InterPro" id="IPR005517">
    <property type="entry name" value="Transl_elong_EFG/EF2_IV"/>
</dbReference>
<dbReference type="NCBIfam" id="TIGR00484">
    <property type="entry name" value="EF-G"/>
    <property type="match status" value="1"/>
</dbReference>
<dbReference type="NCBIfam" id="NF009381">
    <property type="entry name" value="PRK12740.1-5"/>
    <property type="match status" value="1"/>
</dbReference>
<dbReference type="NCBIfam" id="TIGR00231">
    <property type="entry name" value="small_GTP"/>
    <property type="match status" value="1"/>
</dbReference>
<dbReference type="PANTHER" id="PTHR43261:SF1">
    <property type="entry name" value="RIBOSOME-RELEASING FACTOR 2, MITOCHONDRIAL"/>
    <property type="match status" value="1"/>
</dbReference>
<dbReference type="PANTHER" id="PTHR43261">
    <property type="entry name" value="TRANSLATION ELONGATION FACTOR G-RELATED"/>
    <property type="match status" value="1"/>
</dbReference>
<dbReference type="Pfam" id="PF00679">
    <property type="entry name" value="EFG_C"/>
    <property type="match status" value="1"/>
</dbReference>
<dbReference type="Pfam" id="PF14492">
    <property type="entry name" value="EFG_III"/>
    <property type="match status" value="1"/>
</dbReference>
<dbReference type="Pfam" id="PF03764">
    <property type="entry name" value="EFG_IV"/>
    <property type="match status" value="1"/>
</dbReference>
<dbReference type="Pfam" id="PF00009">
    <property type="entry name" value="GTP_EFTU"/>
    <property type="match status" value="1"/>
</dbReference>
<dbReference type="Pfam" id="PF03144">
    <property type="entry name" value="GTP_EFTU_D2"/>
    <property type="match status" value="1"/>
</dbReference>
<dbReference type="PRINTS" id="PR00315">
    <property type="entry name" value="ELONGATNFCT"/>
</dbReference>
<dbReference type="SMART" id="SM00838">
    <property type="entry name" value="EFG_C"/>
    <property type="match status" value="1"/>
</dbReference>
<dbReference type="SMART" id="SM00889">
    <property type="entry name" value="EFG_IV"/>
    <property type="match status" value="1"/>
</dbReference>
<dbReference type="SUPFAM" id="SSF54980">
    <property type="entry name" value="EF-G C-terminal domain-like"/>
    <property type="match status" value="2"/>
</dbReference>
<dbReference type="SUPFAM" id="SSF52540">
    <property type="entry name" value="P-loop containing nucleoside triphosphate hydrolases"/>
    <property type="match status" value="1"/>
</dbReference>
<dbReference type="SUPFAM" id="SSF54211">
    <property type="entry name" value="Ribosomal protein S5 domain 2-like"/>
    <property type="match status" value="1"/>
</dbReference>
<dbReference type="SUPFAM" id="SSF50447">
    <property type="entry name" value="Translation proteins"/>
    <property type="match status" value="1"/>
</dbReference>
<dbReference type="PROSITE" id="PS00301">
    <property type="entry name" value="G_TR_1"/>
    <property type="match status" value="1"/>
</dbReference>
<dbReference type="PROSITE" id="PS51722">
    <property type="entry name" value="G_TR_2"/>
    <property type="match status" value="1"/>
</dbReference>
<proteinExistence type="inferred from homology"/>
<keyword id="KW-0963">Cytoplasm</keyword>
<keyword id="KW-0251">Elongation factor</keyword>
<keyword id="KW-0342">GTP-binding</keyword>
<keyword id="KW-0547">Nucleotide-binding</keyword>
<keyword id="KW-0648">Protein biosynthesis</keyword>
<sequence length="694" mass="76251">MAREYKIEDYRNFGIMAHIDAGKTTMTERILFYTGKNHKIGETHDGASTMDWMEQEQERGITITSAATTTFWQGRDGKKRRFNIIDTPGHVDFTIEVERSLRVLDGAIALLDANAGVEPQTETVWRQAEKYHVPRMVFVNKMDKIGADFYRSVEMVGSRLGAVALPVQLPIGAENDFVGVVDLIEMKALTWDGTIGAPATVGEIPADMADKAEEYREKLIELAVEIDEAAMEAYLEGTMPTNDELRALIRKGTIEVKFHPILCGTAFKNRGVQPLLDAVVEFLPAPTDVPAIKGIDVKTETETTRESSDEAPLSMLAFKIMNDPFVGSLTFARIYSGKLTKGVSLENTVKGKRERIGRMLQMHSNSREDIDEAFAGDIVALAGLKETTTGDTLCDPLKPVILERMEFPDPVIEIAIEPKTKADQEKMGIALNRLAAEDPSFRVKSDEESGQTIIAGMGELHLDILVDRMKREFKVEANVGAPQVAYRESITRAAEIDYTHKKQSGGSGQFARVKIIFEPHDGDDFIFESKIVGGSVPKEYIPGVQKGIESVMGAGPLAGFPMLGVKATLIDGAYHDVDSSVLAFEIASRAAFREGAQKAGAQLLEPIMKVEVVTPEDYVGDVIGDLNSRRGQISGTEGRGIATVVNAMVPLANMFGYVNSLRSMSQGRAQYTMQFDHYEPVPTAVAQEIQKKFA</sequence>
<organism>
    <name type="scientific">Brucella ovis (strain ATCC 25840 / 63/290 / NCTC 10512)</name>
    <dbReference type="NCBI Taxonomy" id="444178"/>
    <lineage>
        <taxon>Bacteria</taxon>
        <taxon>Pseudomonadati</taxon>
        <taxon>Pseudomonadota</taxon>
        <taxon>Alphaproteobacteria</taxon>
        <taxon>Hyphomicrobiales</taxon>
        <taxon>Brucellaceae</taxon>
        <taxon>Brucella/Ochrobactrum group</taxon>
        <taxon>Brucella</taxon>
    </lineage>
</organism>
<comment type="function">
    <text evidence="1">Catalyzes the GTP-dependent ribosomal translocation step during translation elongation. During this step, the ribosome changes from the pre-translocational (PRE) to the post-translocational (POST) state as the newly formed A-site-bound peptidyl-tRNA and P-site-bound deacylated tRNA move to the P and E sites, respectively. Catalyzes the coordinated movement of the two tRNA molecules, the mRNA and conformational changes in the ribosome.</text>
</comment>
<comment type="subcellular location">
    <subcellularLocation>
        <location evidence="1">Cytoplasm</location>
    </subcellularLocation>
</comment>
<comment type="similarity">
    <text evidence="1">Belongs to the TRAFAC class translation factor GTPase superfamily. Classic translation factor GTPase family. EF-G/EF-2 subfamily.</text>
</comment>
<protein>
    <recommendedName>
        <fullName evidence="1">Elongation factor G</fullName>
        <shortName evidence="1">EF-G</shortName>
    </recommendedName>
</protein>
<gene>
    <name evidence="1" type="primary">fusA</name>
    <name type="ordered locus">BOV_1199</name>
</gene>
<reference key="1">
    <citation type="journal article" date="2009" name="PLoS ONE">
        <title>Genome degradation in Brucella ovis corresponds with narrowing of its host range and tissue tropism.</title>
        <authorList>
            <person name="Tsolis R.M."/>
            <person name="Seshadri R."/>
            <person name="Santos R.L."/>
            <person name="Sangari F.J."/>
            <person name="Lobo J.M."/>
            <person name="de Jong M.F."/>
            <person name="Ren Q."/>
            <person name="Myers G."/>
            <person name="Brinkac L.M."/>
            <person name="Nelson W.C."/>
            <person name="Deboy R.T."/>
            <person name="Angiuoli S."/>
            <person name="Khouri H."/>
            <person name="Dimitrov G."/>
            <person name="Robinson J.R."/>
            <person name="Mulligan S."/>
            <person name="Walker R.L."/>
            <person name="Elzer P.E."/>
            <person name="Hassan K.A."/>
            <person name="Paulsen I.T."/>
        </authorList>
    </citation>
    <scope>NUCLEOTIDE SEQUENCE [LARGE SCALE GENOMIC DNA]</scope>
    <source>
        <strain>ATCC 25840 / 63/290 / NCTC 10512</strain>
    </source>
</reference>
<evidence type="ECO:0000255" key="1">
    <source>
        <dbReference type="HAMAP-Rule" id="MF_00054"/>
    </source>
</evidence>
<name>EFG_BRUO2</name>
<feature type="chain" id="PRO_1000008806" description="Elongation factor G">
    <location>
        <begin position="1"/>
        <end position="694"/>
    </location>
</feature>
<feature type="domain" description="tr-type G">
    <location>
        <begin position="8"/>
        <end position="287"/>
    </location>
</feature>
<feature type="binding site" evidence="1">
    <location>
        <begin position="17"/>
        <end position="24"/>
    </location>
    <ligand>
        <name>GTP</name>
        <dbReference type="ChEBI" id="CHEBI:37565"/>
    </ligand>
</feature>
<feature type="binding site" evidence="1">
    <location>
        <begin position="86"/>
        <end position="90"/>
    </location>
    <ligand>
        <name>GTP</name>
        <dbReference type="ChEBI" id="CHEBI:37565"/>
    </ligand>
</feature>
<feature type="binding site" evidence="1">
    <location>
        <begin position="140"/>
        <end position="143"/>
    </location>
    <ligand>
        <name>GTP</name>
        <dbReference type="ChEBI" id="CHEBI:37565"/>
    </ligand>
</feature>
<accession>A5VR09</accession>